<evidence type="ECO:0000255" key="1">
    <source>
        <dbReference type="HAMAP-Rule" id="MF_00523"/>
    </source>
</evidence>
<evidence type="ECO:0000305" key="2"/>
<accession>Q6AJ06</accession>
<name>LPXD_DESPS</name>
<keyword id="KW-0012">Acyltransferase</keyword>
<keyword id="KW-0441">Lipid A biosynthesis</keyword>
<keyword id="KW-0444">Lipid biosynthesis</keyword>
<keyword id="KW-0443">Lipid metabolism</keyword>
<keyword id="KW-1185">Reference proteome</keyword>
<keyword id="KW-0677">Repeat</keyword>
<keyword id="KW-0808">Transferase</keyword>
<dbReference type="EC" id="2.3.1.191" evidence="1"/>
<dbReference type="EMBL" id="CR522870">
    <property type="protein sequence ID" value="CAG37674.1"/>
    <property type="status" value="ALT_INIT"/>
    <property type="molecule type" value="Genomic_DNA"/>
</dbReference>
<dbReference type="RefSeq" id="WP_041278880.1">
    <property type="nucleotide sequence ID" value="NC_006138.1"/>
</dbReference>
<dbReference type="SMR" id="Q6AJ06"/>
<dbReference type="STRING" id="177439.DP2945"/>
<dbReference type="KEGG" id="dps:DP2945"/>
<dbReference type="eggNOG" id="COG1044">
    <property type="taxonomic scope" value="Bacteria"/>
</dbReference>
<dbReference type="HOGENOM" id="CLU_049865_0_0_7"/>
<dbReference type="OrthoDB" id="9784739at2"/>
<dbReference type="UniPathway" id="UPA00973"/>
<dbReference type="Proteomes" id="UP000000602">
    <property type="component" value="Chromosome"/>
</dbReference>
<dbReference type="GO" id="GO:0016020">
    <property type="term" value="C:membrane"/>
    <property type="evidence" value="ECO:0007669"/>
    <property type="project" value="GOC"/>
</dbReference>
<dbReference type="GO" id="GO:0016410">
    <property type="term" value="F:N-acyltransferase activity"/>
    <property type="evidence" value="ECO:0007669"/>
    <property type="project" value="InterPro"/>
</dbReference>
<dbReference type="GO" id="GO:0009245">
    <property type="term" value="P:lipid A biosynthetic process"/>
    <property type="evidence" value="ECO:0007669"/>
    <property type="project" value="UniProtKB-UniRule"/>
</dbReference>
<dbReference type="CDD" id="cd03352">
    <property type="entry name" value="LbH_LpxD"/>
    <property type="match status" value="1"/>
</dbReference>
<dbReference type="Gene3D" id="2.160.10.10">
    <property type="entry name" value="Hexapeptide repeat proteins"/>
    <property type="match status" value="1"/>
</dbReference>
<dbReference type="Gene3D" id="3.40.1390.10">
    <property type="entry name" value="MurE/MurF, N-terminal domain"/>
    <property type="match status" value="1"/>
</dbReference>
<dbReference type="HAMAP" id="MF_00523">
    <property type="entry name" value="LpxD"/>
    <property type="match status" value="1"/>
</dbReference>
<dbReference type="InterPro" id="IPR001451">
    <property type="entry name" value="Hexapep"/>
</dbReference>
<dbReference type="InterPro" id="IPR007691">
    <property type="entry name" value="LpxD"/>
</dbReference>
<dbReference type="InterPro" id="IPR011004">
    <property type="entry name" value="Trimer_LpxA-like_sf"/>
</dbReference>
<dbReference type="InterPro" id="IPR020573">
    <property type="entry name" value="UDP_GlcNAc_AcTrfase_non-rep"/>
</dbReference>
<dbReference type="NCBIfam" id="TIGR01853">
    <property type="entry name" value="lipid_A_lpxD"/>
    <property type="match status" value="1"/>
</dbReference>
<dbReference type="NCBIfam" id="NF002060">
    <property type="entry name" value="PRK00892.1"/>
    <property type="match status" value="1"/>
</dbReference>
<dbReference type="PANTHER" id="PTHR43378">
    <property type="entry name" value="UDP-3-O-ACYLGLUCOSAMINE N-ACYLTRANSFERASE"/>
    <property type="match status" value="1"/>
</dbReference>
<dbReference type="PANTHER" id="PTHR43378:SF2">
    <property type="entry name" value="UDP-3-O-ACYLGLUCOSAMINE N-ACYLTRANSFERASE 1, MITOCHONDRIAL-RELATED"/>
    <property type="match status" value="1"/>
</dbReference>
<dbReference type="Pfam" id="PF00132">
    <property type="entry name" value="Hexapep"/>
    <property type="match status" value="1"/>
</dbReference>
<dbReference type="Pfam" id="PF04613">
    <property type="entry name" value="LpxD"/>
    <property type="match status" value="1"/>
</dbReference>
<dbReference type="SUPFAM" id="SSF51161">
    <property type="entry name" value="Trimeric LpxA-like enzymes"/>
    <property type="match status" value="1"/>
</dbReference>
<comment type="function">
    <text evidence="1">Catalyzes the N-acylation of UDP-3-O-acylglucosamine using 3-hydroxyacyl-ACP as the acyl donor. Is involved in the biosynthesis of lipid A, a phosphorylated glycolipid that anchors the lipopolysaccharide to the outer membrane of the cell.</text>
</comment>
<comment type="catalytic activity">
    <reaction evidence="1">
        <text>a UDP-3-O-[(3R)-3-hydroxyacyl]-alpha-D-glucosamine + a (3R)-hydroxyacyl-[ACP] = a UDP-2-N,3-O-bis[(3R)-3-hydroxyacyl]-alpha-D-glucosamine + holo-[ACP] + H(+)</text>
        <dbReference type="Rhea" id="RHEA:53836"/>
        <dbReference type="Rhea" id="RHEA-COMP:9685"/>
        <dbReference type="Rhea" id="RHEA-COMP:9945"/>
        <dbReference type="ChEBI" id="CHEBI:15378"/>
        <dbReference type="ChEBI" id="CHEBI:64479"/>
        <dbReference type="ChEBI" id="CHEBI:78827"/>
        <dbReference type="ChEBI" id="CHEBI:137740"/>
        <dbReference type="ChEBI" id="CHEBI:137748"/>
        <dbReference type="EC" id="2.3.1.191"/>
    </reaction>
</comment>
<comment type="pathway">
    <text evidence="1">Bacterial outer membrane biogenesis; LPS lipid A biosynthesis.</text>
</comment>
<comment type="subunit">
    <text evidence="1">Homotrimer.</text>
</comment>
<comment type="similarity">
    <text evidence="1">Belongs to the transferase hexapeptide repeat family. LpxD subfamily.</text>
</comment>
<comment type="sequence caution" evidence="2">
    <conflict type="erroneous initiation">
        <sequence resource="EMBL-CDS" id="CAG37674"/>
    </conflict>
</comment>
<organism>
    <name type="scientific">Desulfotalea psychrophila (strain LSv54 / DSM 12343)</name>
    <dbReference type="NCBI Taxonomy" id="177439"/>
    <lineage>
        <taxon>Bacteria</taxon>
        <taxon>Pseudomonadati</taxon>
        <taxon>Thermodesulfobacteriota</taxon>
        <taxon>Desulfobulbia</taxon>
        <taxon>Desulfobulbales</taxon>
        <taxon>Desulfocapsaceae</taxon>
        <taxon>Desulfotalea</taxon>
    </lineage>
</organism>
<feature type="chain" id="PRO_0000264364" description="UDP-3-O-acylglucosamine N-acyltransferase">
    <location>
        <begin position="1"/>
        <end position="345"/>
    </location>
</feature>
<feature type="active site" description="Proton acceptor" evidence="1">
    <location>
        <position position="241"/>
    </location>
</feature>
<sequence>MKENITVAMLAELVDGEVIGDGEVLVGNFVSLETAGEGDITFLVKAGDQDLLTSTKAGAVIVHRKVEVESPATLIKVDDAYLAAAKIHTFLLEDEFSPEGIHRSAFVGEGCQISSEVTIKALVSIGNRVVIGPRTRIESGVAIGDDVTIGEDCLLKANVTIADGSQLGNGVTIHSGTVIGSDGYGYATDKMGFHYKRPQVGTVRVDDNVEIGANSCVDRATYGLTWIKSGAKIDNLVQIAHNVVVGENSLIVSQVGISGSTSLGRNVVMGGKAAAVGHLQIGDGVMIAGGSGVLSNLSAGAVVGGIPARPIKQWRKSVVLTTKLPEMQKDIRALKKSVEELAGKN</sequence>
<protein>
    <recommendedName>
        <fullName evidence="1">UDP-3-O-acylglucosamine N-acyltransferase</fullName>
        <ecNumber evidence="1">2.3.1.191</ecNumber>
    </recommendedName>
</protein>
<proteinExistence type="inferred from homology"/>
<reference key="1">
    <citation type="journal article" date="2004" name="Environ. Microbiol.">
        <title>The genome of Desulfotalea psychrophila, a sulfate-reducing bacterium from permanently cold Arctic sediments.</title>
        <authorList>
            <person name="Rabus R."/>
            <person name="Ruepp A."/>
            <person name="Frickey T."/>
            <person name="Rattei T."/>
            <person name="Fartmann B."/>
            <person name="Stark M."/>
            <person name="Bauer M."/>
            <person name="Zibat A."/>
            <person name="Lombardot T."/>
            <person name="Becker I."/>
            <person name="Amann J."/>
            <person name="Gellner K."/>
            <person name="Teeling H."/>
            <person name="Leuschner W.D."/>
            <person name="Gloeckner F.-O."/>
            <person name="Lupas A.N."/>
            <person name="Amann R."/>
            <person name="Klenk H.-P."/>
        </authorList>
    </citation>
    <scope>NUCLEOTIDE SEQUENCE [LARGE SCALE GENOMIC DNA]</scope>
    <source>
        <strain>DSM 12343 / LSv54</strain>
    </source>
</reference>
<gene>
    <name evidence="1" type="primary">lpxD</name>
    <name type="ordered locus">DP2945</name>
</gene>